<sequence>MTDQADTAMPIQFTDAAAAKVKGLLEEEQNPALKLRVYVTGGGCSGFQYGFTFDEKVNDGDFTIEKQGVLLVVDPMSLQYLVGGEVDYTSGLEGSRFFVKNPNATTTCGCGASFSV</sequence>
<name>ERPA_SHEB9</name>
<reference key="1">
    <citation type="submission" date="2007-11" db="EMBL/GenBank/DDBJ databases">
        <title>Complete sequence of chromosome of Shewanella baltica OS195.</title>
        <authorList>
            <consortium name="US DOE Joint Genome Institute"/>
            <person name="Copeland A."/>
            <person name="Lucas S."/>
            <person name="Lapidus A."/>
            <person name="Barry K."/>
            <person name="Glavina del Rio T."/>
            <person name="Dalin E."/>
            <person name="Tice H."/>
            <person name="Pitluck S."/>
            <person name="Chain P."/>
            <person name="Malfatti S."/>
            <person name="Shin M."/>
            <person name="Vergez L."/>
            <person name="Schmutz J."/>
            <person name="Larimer F."/>
            <person name="Land M."/>
            <person name="Hauser L."/>
            <person name="Kyrpides N."/>
            <person name="Kim E."/>
            <person name="Brettar I."/>
            <person name="Rodrigues J."/>
            <person name="Konstantinidis K."/>
            <person name="Klappenbach J."/>
            <person name="Hofle M."/>
            <person name="Tiedje J."/>
            <person name="Richardson P."/>
        </authorList>
    </citation>
    <scope>NUCLEOTIDE SEQUENCE [LARGE SCALE GENOMIC DNA]</scope>
    <source>
        <strain>OS195</strain>
    </source>
</reference>
<comment type="function">
    <text evidence="1">Required for insertion of 4Fe-4S clusters for at least IspG.</text>
</comment>
<comment type="cofactor">
    <cofactor evidence="1">
        <name>iron-sulfur cluster</name>
        <dbReference type="ChEBI" id="CHEBI:30408"/>
    </cofactor>
    <text evidence="1">Binds 1 iron-sulfur cluster per subunit.</text>
</comment>
<comment type="subunit">
    <text evidence="1">Homodimer.</text>
</comment>
<comment type="similarity">
    <text evidence="1">Belongs to the HesB/IscA family.</text>
</comment>
<accession>A9L5J9</accession>
<proteinExistence type="inferred from homology"/>
<feature type="chain" id="PRO_1000087300" description="Iron-sulfur cluster insertion protein ErpA">
    <location>
        <begin position="1"/>
        <end position="116"/>
    </location>
</feature>
<feature type="binding site" evidence="1">
    <location>
        <position position="44"/>
    </location>
    <ligand>
        <name>iron-sulfur cluster</name>
        <dbReference type="ChEBI" id="CHEBI:30408"/>
    </ligand>
</feature>
<feature type="binding site" evidence="1">
    <location>
        <position position="108"/>
    </location>
    <ligand>
        <name>iron-sulfur cluster</name>
        <dbReference type="ChEBI" id="CHEBI:30408"/>
    </ligand>
</feature>
<feature type="binding site" evidence="1">
    <location>
        <position position="110"/>
    </location>
    <ligand>
        <name>iron-sulfur cluster</name>
        <dbReference type="ChEBI" id="CHEBI:30408"/>
    </ligand>
</feature>
<dbReference type="EMBL" id="CP000891">
    <property type="protein sequence ID" value="ABX48416.1"/>
    <property type="molecule type" value="Genomic_DNA"/>
</dbReference>
<dbReference type="RefSeq" id="WP_006080742.1">
    <property type="nucleotide sequence ID" value="NC_009997.1"/>
</dbReference>
<dbReference type="SMR" id="A9L5J9"/>
<dbReference type="GeneID" id="11771515"/>
<dbReference type="KEGG" id="sbn:Sbal195_1241"/>
<dbReference type="HOGENOM" id="CLU_069054_5_3_6"/>
<dbReference type="Proteomes" id="UP000000770">
    <property type="component" value="Chromosome"/>
</dbReference>
<dbReference type="GO" id="GO:0005829">
    <property type="term" value="C:cytosol"/>
    <property type="evidence" value="ECO:0007669"/>
    <property type="project" value="TreeGrafter"/>
</dbReference>
<dbReference type="GO" id="GO:0051537">
    <property type="term" value="F:2 iron, 2 sulfur cluster binding"/>
    <property type="evidence" value="ECO:0007669"/>
    <property type="project" value="TreeGrafter"/>
</dbReference>
<dbReference type="GO" id="GO:0051539">
    <property type="term" value="F:4 iron, 4 sulfur cluster binding"/>
    <property type="evidence" value="ECO:0007669"/>
    <property type="project" value="TreeGrafter"/>
</dbReference>
<dbReference type="GO" id="GO:0005506">
    <property type="term" value="F:iron ion binding"/>
    <property type="evidence" value="ECO:0007669"/>
    <property type="project" value="UniProtKB-UniRule"/>
</dbReference>
<dbReference type="GO" id="GO:0016226">
    <property type="term" value="P:iron-sulfur cluster assembly"/>
    <property type="evidence" value="ECO:0007669"/>
    <property type="project" value="UniProtKB-UniRule"/>
</dbReference>
<dbReference type="FunFam" id="2.60.300.12:FF:000002">
    <property type="entry name" value="Iron-sulfur cluster insertion protein ErpA"/>
    <property type="match status" value="1"/>
</dbReference>
<dbReference type="Gene3D" id="2.60.300.12">
    <property type="entry name" value="HesB-like domain"/>
    <property type="match status" value="1"/>
</dbReference>
<dbReference type="HAMAP" id="MF_01380">
    <property type="entry name" value="Fe_S_insert_ErpA"/>
    <property type="match status" value="1"/>
</dbReference>
<dbReference type="InterPro" id="IPR000361">
    <property type="entry name" value="FeS_biogenesis"/>
</dbReference>
<dbReference type="InterPro" id="IPR016092">
    <property type="entry name" value="FeS_cluster_insertion"/>
</dbReference>
<dbReference type="InterPro" id="IPR017870">
    <property type="entry name" value="FeS_cluster_insertion_CS"/>
</dbReference>
<dbReference type="InterPro" id="IPR023063">
    <property type="entry name" value="FeS_cluster_insertion_RrpA"/>
</dbReference>
<dbReference type="InterPro" id="IPR035903">
    <property type="entry name" value="HesB-like_dom_sf"/>
</dbReference>
<dbReference type="NCBIfam" id="TIGR00049">
    <property type="entry name" value="iron-sulfur cluster assembly accessory protein"/>
    <property type="match status" value="1"/>
</dbReference>
<dbReference type="NCBIfam" id="NF010147">
    <property type="entry name" value="PRK13623.1"/>
    <property type="match status" value="1"/>
</dbReference>
<dbReference type="PANTHER" id="PTHR43011">
    <property type="entry name" value="IRON-SULFUR CLUSTER ASSEMBLY 2 HOMOLOG, MITOCHONDRIAL"/>
    <property type="match status" value="1"/>
</dbReference>
<dbReference type="PANTHER" id="PTHR43011:SF1">
    <property type="entry name" value="IRON-SULFUR CLUSTER ASSEMBLY 2 HOMOLOG, MITOCHONDRIAL"/>
    <property type="match status" value="1"/>
</dbReference>
<dbReference type="Pfam" id="PF01521">
    <property type="entry name" value="Fe-S_biosyn"/>
    <property type="match status" value="1"/>
</dbReference>
<dbReference type="SUPFAM" id="SSF89360">
    <property type="entry name" value="HesB-like domain"/>
    <property type="match status" value="1"/>
</dbReference>
<dbReference type="PROSITE" id="PS01152">
    <property type="entry name" value="HESB"/>
    <property type="match status" value="1"/>
</dbReference>
<organism>
    <name type="scientific">Shewanella baltica (strain OS195)</name>
    <dbReference type="NCBI Taxonomy" id="399599"/>
    <lineage>
        <taxon>Bacteria</taxon>
        <taxon>Pseudomonadati</taxon>
        <taxon>Pseudomonadota</taxon>
        <taxon>Gammaproteobacteria</taxon>
        <taxon>Alteromonadales</taxon>
        <taxon>Shewanellaceae</taxon>
        <taxon>Shewanella</taxon>
    </lineage>
</organism>
<protein>
    <recommendedName>
        <fullName evidence="1">Iron-sulfur cluster insertion protein ErpA</fullName>
    </recommendedName>
</protein>
<gene>
    <name evidence="1" type="primary">erpA</name>
    <name type="ordered locus">Sbal195_1241</name>
</gene>
<evidence type="ECO:0000255" key="1">
    <source>
        <dbReference type="HAMAP-Rule" id="MF_01380"/>
    </source>
</evidence>
<keyword id="KW-0408">Iron</keyword>
<keyword id="KW-0411">Iron-sulfur</keyword>
<keyword id="KW-0479">Metal-binding</keyword>